<proteinExistence type="inferred from homology"/>
<organism>
    <name type="scientific">Histophilus somni (strain 2336)</name>
    <name type="common">Haemophilus somnus</name>
    <dbReference type="NCBI Taxonomy" id="228400"/>
    <lineage>
        <taxon>Bacteria</taxon>
        <taxon>Pseudomonadati</taxon>
        <taxon>Pseudomonadota</taxon>
        <taxon>Gammaproteobacteria</taxon>
        <taxon>Pasteurellales</taxon>
        <taxon>Pasteurellaceae</taxon>
        <taxon>Histophilus</taxon>
    </lineage>
</organism>
<protein>
    <recommendedName>
        <fullName evidence="1">5'-methylthioadenosine/S-adenosylhomocysteine nucleosidase</fullName>
        <shortName evidence="1">MTA/SAH nucleosidase</shortName>
        <shortName evidence="1">MTAN</shortName>
        <ecNumber evidence="1">3.2.2.9</ecNumber>
    </recommendedName>
    <alternativeName>
        <fullName evidence="1">5'-deoxyadenosine nucleosidase</fullName>
        <shortName evidence="1">DOA nucleosidase</shortName>
        <shortName evidence="1">dAdo nucleosidase</shortName>
    </alternativeName>
    <alternativeName>
        <fullName evidence="1">5'-methylthioadenosine nucleosidase</fullName>
        <shortName evidence="1">MTA nucleosidase</shortName>
    </alternativeName>
    <alternativeName>
        <fullName evidence="1">S-adenosylhomocysteine nucleosidase</fullName>
        <shortName evidence="1">AdoHcy nucleosidase</shortName>
        <shortName evidence="1">SAH nucleosidase</shortName>
        <shortName evidence="1">SRH nucleosidase</shortName>
    </alternativeName>
</protein>
<reference key="1">
    <citation type="submission" date="2008-02" db="EMBL/GenBank/DDBJ databases">
        <title>Complete sequence of Haemophilus somnus 2336.</title>
        <authorList>
            <consortium name="US DOE Joint Genome Institute"/>
            <person name="Siddaramappa S."/>
            <person name="Duncan A.J."/>
            <person name="Challacombe J.F."/>
            <person name="Rainey D."/>
            <person name="Gillaspy A.F."/>
            <person name="Carson M."/>
            <person name="Gipson J."/>
            <person name="Gipson M."/>
            <person name="Bruce D."/>
            <person name="Detter J.C."/>
            <person name="Han C.S."/>
            <person name="Land M."/>
            <person name="Tapia R."/>
            <person name="Thompson L.S."/>
            <person name="Orvis J."/>
            <person name="Zaitshik J."/>
            <person name="Barnes G."/>
            <person name="Brettin T.S."/>
            <person name="Dyer D.W."/>
            <person name="Inzana T.J."/>
        </authorList>
    </citation>
    <scope>NUCLEOTIDE SEQUENCE [LARGE SCALE GENOMIC DNA]</scope>
    <source>
        <strain>2336</strain>
    </source>
</reference>
<sequence length="229" mass="24023">MKVGIVGAMAQEVEILASLIENKNVVHIAGCTIYQGNIQDKEVALLQSGIGKVAAAMGTTLLLQMFKPDIVINTGSAGGVSSGLKVGDVVVSTQTVYHDADVTAFGYAKGQLPACPPAFISDPKLTALVENVAEQQGINLTSGLICSGDSFINSAEKLAWIKANFPEVVAIEMEATAIAQVCHKFNIPFVVIRAISDVGDGEASISFEEFLPLAARQSSSMVLKILQSL</sequence>
<feature type="chain" id="PRO_0000359309" description="5'-methylthioadenosine/S-adenosylhomocysteine nucleosidase">
    <location>
        <begin position="1"/>
        <end position="229"/>
    </location>
</feature>
<feature type="active site" description="Proton acceptor" evidence="1">
    <location>
        <position position="12"/>
    </location>
</feature>
<feature type="active site" description="Proton donor" evidence="1">
    <location>
        <position position="197"/>
    </location>
</feature>
<feature type="binding site" evidence="1">
    <location>
        <position position="78"/>
    </location>
    <ligand>
        <name>substrate</name>
    </ligand>
</feature>
<feature type="binding site" evidence="1">
    <location>
        <position position="152"/>
    </location>
    <ligand>
        <name>substrate</name>
    </ligand>
</feature>
<feature type="binding site" evidence="1">
    <location>
        <begin position="173"/>
        <end position="174"/>
    </location>
    <ligand>
        <name>substrate</name>
    </ligand>
</feature>
<name>MTNN_HISS2</name>
<keyword id="KW-0028">Amino-acid biosynthesis</keyword>
<keyword id="KW-0378">Hydrolase</keyword>
<keyword id="KW-0486">Methionine biosynthesis</keyword>
<gene>
    <name evidence="1" type="primary">mtnN</name>
    <name type="ordered locus">HSM_0529</name>
</gene>
<evidence type="ECO:0000255" key="1">
    <source>
        <dbReference type="HAMAP-Rule" id="MF_01684"/>
    </source>
</evidence>
<accession>B0URX4</accession>
<dbReference type="EC" id="3.2.2.9" evidence="1"/>
<dbReference type="EMBL" id="CP000947">
    <property type="protein sequence ID" value="ACA32179.1"/>
    <property type="molecule type" value="Genomic_DNA"/>
</dbReference>
<dbReference type="RefSeq" id="WP_012341363.1">
    <property type="nucleotide sequence ID" value="NC_010519.1"/>
</dbReference>
<dbReference type="SMR" id="B0URX4"/>
<dbReference type="STRING" id="228400.HSM_0529"/>
<dbReference type="GeneID" id="31486807"/>
<dbReference type="KEGG" id="hsm:HSM_0529"/>
<dbReference type="HOGENOM" id="CLU_031248_2_2_6"/>
<dbReference type="UniPathway" id="UPA00904">
    <property type="reaction ID" value="UER00871"/>
</dbReference>
<dbReference type="GO" id="GO:0005829">
    <property type="term" value="C:cytosol"/>
    <property type="evidence" value="ECO:0007669"/>
    <property type="project" value="TreeGrafter"/>
</dbReference>
<dbReference type="GO" id="GO:0008782">
    <property type="term" value="F:adenosylhomocysteine nucleosidase activity"/>
    <property type="evidence" value="ECO:0007669"/>
    <property type="project" value="UniProtKB-UniRule"/>
</dbReference>
<dbReference type="GO" id="GO:0008930">
    <property type="term" value="F:methylthioadenosine nucleosidase activity"/>
    <property type="evidence" value="ECO:0007669"/>
    <property type="project" value="UniProtKB-UniRule"/>
</dbReference>
<dbReference type="GO" id="GO:0019509">
    <property type="term" value="P:L-methionine salvage from methylthioadenosine"/>
    <property type="evidence" value="ECO:0007669"/>
    <property type="project" value="UniProtKB-UniRule"/>
</dbReference>
<dbReference type="GO" id="GO:0019284">
    <property type="term" value="P:L-methionine salvage from S-adenosylmethionine"/>
    <property type="evidence" value="ECO:0007669"/>
    <property type="project" value="TreeGrafter"/>
</dbReference>
<dbReference type="GO" id="GO:0009164">
    <property type="term" value="P:nucleoside catabolic process"/>
    <property type="evidence" value="ECO:0007669"/>
    <property type="project" value="InterPro"/>
</dbReference>
<dbReference type="CDD" id="cd09008">
    <property type="entry name" value="MTAN"/>
    <property type="match status" value="1"/>
</dbReference>
<dbReference type="FunFam" id="3.40.50.1580:FF:000001">
    <property type="entry name" value="MTA/SAH nucleosidase family protein"/>
    <property type="match status" value="1"/>
</dbReference>
<dbReference type="Gene3D" id="3.40.50.1580">
    <property type="entry name" value="Nucleoside phosphorylase domain"/>
    <property type="match status" value="1"/>
</dbReference>
<dbReference type="HAMAP" id="MF_01684">
    <property type="entry name" value="Salvage_MtnN"/>
    <property type="match status" value="1"/>
</dbReference>
<dbReference type="InterPro" id="IPR010049">
    <property type="entry name" value="MTA_SAH_Nsdase"/>
</dbReference>
<dbReference type="InterPro" id="IPR000845">
    <property type="entry name" value="Nucleoside_phosphorylase_d"/>
</dbReference>
<dbReference type="InterPro" id="IPR035994">
    <property type="entry name" value="Nucleoside_phosphorylase_sf"/>
</dbReference>
<dbReference type="NCBIfam" id="TIGR01704">
    <property type="entry name" value="MTA_SAH-Nsdase"/>
    <property type="match status" value="1"/>
</dbReference>
<dbReference type="NCBIfam" id="NF004079">
    <property type="entry name" value="PRK05584.1"/>
    <property type="match status" value="1"/>
</dbReference>
<dbReference type="PANTHER" id="PTHR46832">
    <property type="entry name" value="5'-METHYLTHIOADENOSINE/S-ADENOSYLHOMOCYSTEINE NUCLEOSIDASE"/>
    <property type="match status" value="1"/>
</dbReference>
<dbReference type="PANTHER" id="PTHR46832:SF1">
    <property type="entry name" value="5'-METHYLTHIOADENOSINE_S-ADENOSYLHOMOCYSTEINE NUCLEOSIDASE"/>
    <property type="match status" value="1"/>
</dbReference>
<dbReference type="Pfam" id="PF01048">
    <property type="entry name" value="PNP_UDP_1"/>
    <property type="match status" value="1"/>
</dbReference>
<dbReference type="SUPFAM" id="SSF53167">
    <property type="entry name" value="Purine and uridine phosphorylases"/>
    <property type="match status" value="1"/>
</dbReference>
<comment type="function">
    <text evidence="1">Catalyzes the irreversible cleavage of the glycosidic bond in both 5'-methylthioadenosine (MTA) and S-adenosylhomocysteine (SAH/AdoHcy) to adenine and the corresponding thioribose, 5'-methylthioribose and S-ribosylhomocysteine, respectively. Also cleaves 5'-deoxyadenosine, a toxic by-product of radical S-adenosylmethionine (SAM) enzymes, into 5-deoxyribose and adenine.</text>
</comment>
<comment type="catalytic activity">
    <reaction evidence="1">
        <text>S-adenosyl-L-homocysteine + H2O = S-(5-deoxy-D-ribos-5-yl)-L-homocysteine + adenine</text>
        <dbReference type="Rhea" id="RHEA:17805"/>
        <dbReference type="ChEBI" id="CHEBI:15377"/>
        <dbReference type="ChEBI" id="CHEBI:16708"/>
        <dbReference type="ChEBI" id="CHEBI:57856"/>
        <dbReference type="ChEBI" id="CHEBI:58195"/>
        <dbReference type="EC" id="3.2.2.9"/>
    </reaction>
</comment>
<comment type="catalytic activity">
    <reaction evidence="1">
        <text>S-methyl-5'-thioadenosine + H2O = 5-(methylsulfanyl)-D-ribose + adenine</text>
        <dbReference type="Rhea" id="RHEA:13617"/>
        <dbReference type="ChEBI" id="CHEBI:15377"/>
        <dbReference type="ChEBI" id="CHEBI:16708"/>
        <dbReference type="ChEBI" id="CHEBI:17509"/>
        <dbReference type="ChEBI" id="CHEBI:78440"/>
        <dbReference type="EC" id="3.2.2.9"/>
    </reaction>
</comment>
<comment type="catalytic activity">
    <reaction evidence="1">
        <text>5'-deoxyadenosine + H2O = 5-deoxy-D-ribose + adenine</text>
        <dbReference type="Rhea" id="RHEA:29859"/>
        <dbReference type="ChEBI" id="CHEBI:15377"/>
        <dbReference type="ChEBI" id="CHEBI:16708"/>
        <dbReference type="ChEBI" id="CHEBI:17319"/>
        <dbReference type="ChEBI" id="CHEBI:149540"/>
        <dbReference type="EC" id="3.2.2.9"/>
    </reaction>
    <physiologicalReaction direction="left-to-right" evidence="1">
        <dbReference type="Rhea" id="RHEA:29860"/>
    </physiologicalReaction>
</comment>
<comment type="pathway">
    <text evidence="1">Amino-acid biosynthesis; L-methionine biosynthesis via salvage pathway; S-methyl-5-thio-alpha-D-ribose 1-phosphate from S-methyl-5'-thioadenosine (hydrolase route): step 1/2.</text>
</comment>
<comment type="similarity">
    <text evidence="1">Belongs to the PNP/UDP phosphorylase family. MtnN subfamily.</text>
</comment>